<comment type="function">
    <text>Ferredoxins are iron-sulfur proteins that transfer electrons in a wide variety of metabolic reactions.</text>
</comment>
<comment type="cofactor">
    <cofactor>
        <name>[4Fe-4S] cluster</name>
        <dbReference type="ChEBI" id="CHEBI:49883"/>
    </cofactor>
    <text>Binds 2 [4Fe-4S] clusters.</text>
</comment>
<accession>Q8KBP9</accession>
<reference key="1">
    <citation type="journal article" date="2002" name="Proc. Natl. Acad. Sci. U.S.A.">
        <title>The complete genome sequence of Chlorobium tepidum TLS, a photosynthetic, anaerobic, green-sulfur bacterium.</title>
        <authorList>
            <person name="Eisen J.A."/>
            <person name="Nelson K.E."/>
            <person name="Paulsen I.T."/>
            <person name="Heidelberg J.F."/>
            <person name="Wu M."/>
            <person name="Dodson R.J."/>
            <person name="DeBoy R.T."/>
            <person name="Gwinn M.L."/>
            <person name="Nelson W.C."/>
            <person name="Haft D.H."/>
            <person name="Hickey E.K."/>
            <person name="Peterson J.D."/>
            <person name="Durkin A.S."/>
            <person name="Kolonay J.F."/>
            <person name="Yang F."/>
            <person name="Holt I.E."/>
            <person name="Umayam L.A."/>
            <person name="Mason T.M."/>
            <person name="Brenner M."/>
            <person name="Shea T.P."/>
            <person name="Parksey D.S."/>
            <person name="Nierman W.C."/>
            <person name="Feldblyum T.V."/>
            <person name="Hansen C.L."/>
            <person name="Craven M.B."/>
            <person name="Radune D."/>
            <person name="Vamathevan J.J."/>
            <person name="Khouri H.M."/>
            <person name="White O."/>
            <person name="Gruber T.M."/>
            <person name="Ketchum K.A."/>
            <person name="Venter J.C."/>
            <person name="Tettelin H."/>
            <person name="Bryant D.A."/>
            <person name="Fraser C.M."/>
        </authorList>
    </citation>
    <scope>NUCLEOTIDE SEQUENCE [LARGE SCALE GENOMIC DNA]</scope>
    <source>
        <strain>ATCC 49652 / DSM 12025 / NBRC 103806 / TLS</strain>
    </source>
</reference>
<dbReference type="EMBL" id="AE006470">
    <property type="protein sequence ID" value="AAM72958.1"/>
    <property type="molecule type" value="Genomic_DNA"/>
</dbReference>
<dbReference type="RefSeq" id="NP_662616.1">
    <property type="nucleotide sequence ID" value="NC_002932.3"/>
</dbReference>
<dbReference type="RefSeq" id="WP_010933397.1">
    <property type="nucleotide sequence ID" value="NC_002932.3"/>
</dbReference>
<dbReference type="SMR" id="Q8KBP9"/>
<dbReference type="STRING" id="194439.CT1736"/>
<dbReference type="EnsemblBacteria" id="AAM72958">
    <property type="protein sequence ID" value="AAM72958"/>
    <property type="gene ID" value="CT1736"/>
</dbReference>
<dbReference type="KEGG" id="cte:CT1736"/>
<dbReference type="PATRIC" id="fig|194439.7.peg.1572"/>
<dbReference type="eggNOG" id="COG1145">
    <property type="taxonomic scope" value="Bacteria"/>
</dbReference>
<dbReference type="HOGENOM" id="CLU_139698_11_0_10"/>
<dbReference type="OrthoDB" id="9803397at2"/>
<dbReference type="Proteomes" id="UP000001007">
    <property type="component" value="Chromosome"/>
</dbReference>
<dbReference type="GO" id="GO:0051539">
    <property type="term" value="F:4 iron, 4 sulfur cluster binding"/>
    <property type="evidence" value="ECO:0007669"/>
    <property type="project" value="UniProtKB-KW"/>
</dbReference>
<dbReference type="GO" id="GO:0046872">
    <property type="term" value="F:metal ion binding"/>
    <property type="evidence" value="ECO:0007669"/>
    <property type="project" value="UniProtKB-KW"/>
</dbReference>
<dbReference type="FunFam" id="3.30.70.20:FF:000045">
    <property type="entry name" value="Ferredoxin, 4Fe-4S"/>
    <property type="match status" value="1"/>
</dbReference>
<dbReference type="Gene3D" id="3.30.70.20">
    <property type="match status" value="1"/>
</dbReference>
<dbReference type="InterPro" id="IPR017896">
    <property type="entry name" value="4Fe4S_Fe-S-bd"/>
</dbReference>
<dbReference type="InterPro" id="IPR017900">
    <property type="entry name" value="4Fe4S_Fe_S_CS"/>
</dbReference>
<dbReference type="Pfam" id="PF00037">
    <property type="entry name" value="Fer4"/>
    <property type="match status" value="1"/>
</dbReference>
<dbReference type="SUPFAM" id="SSF54862">
    <property type="entry name" value="4Fe-4S ferredoxins"/>
    <property type="match status" value="1"/>
</dbReference>
<dbReference type="PROSITE" id="PS00198">
    <property type="entry name" value="4FE4S_FER_1"/>
    <property type="match status" value="1"/>
</dbReference>
<dbReference type="PROSITE" id="PS51379">
    <property type="entry name" value="4FE4S_FER_2"/>
    <property type="match status" value="2"/>
</dbReference>
<proteinExistence type="inferred from homology"/>
<feature type="initiator methionine" description="Removed" evidence="1">
    <location>
        <position position="1"/>
    </location>
</feature>
<feature type="chain" id="PRO_0000159126" description="Ferredoxin-3">
    <location>
        <begin position="2"/>
        <end position="62"/>
    </location>
</feature>
<feature type="domain" description="4Fe-4S ferredoxin-type 1" evidence="2">
    <location>
        <begin position="2"/>
        <end position="28"/>
    </location>
</feature>
<feature type="domain" description="4Fe-4S ferredoxin-type 2" evidence="2">
    <location>
        <begin position="29"/>
        <end position="62"/>
    </location>
</feature>
<feature type="binding site" evidence="1">
    <location>
        <position position="9"/>
    </location>
    <ligand>
        <name>[4Fe-4S] cluster</name>
        <dbReference type="ChEBI" id="CHEBI:49883"/>
        <label>1</label>
    </ligand>
</feature>
<feature type="binding site" evidence="1">
    <location>
        <position position="12"/>
    </location>
    <ligand>
        <name>[4Fe-4S] cluster</name>
        <dbReference type="ChEBI" id="CHEBI:49883"/>
        <label>1</label>
    </ligand>
</feature>
<feature type="binding site" evidence="1">
    <location>
        <position position="15"/>
    </location>
    <ligand>
        <name>[4Fe-4S] cluster</name>
        <dbReference type="ChEBI" id="CHEBI:49883"/>
        <label>1</label>
    </ligand>
</feature>
<feature type="binding site" evidence="1">
    <location>
        <position position="19"/>
    </location>
    <ligand>
        <name>[4Fe-4S] cluster</name>
        <dbReference type="ChEBI" id="CHEBI:49883"/>
        <label>2</label>
    </ligand>
</feature>
<feature type="binding site" evidence="1">
    <location>
        <position position="38"/>
    </location>
    <ligand>
        <name>[4Fe-4S] cluster</name>
        <dbReference type="ChEBI" id="CHEBI:49883"/>
        <label>2</label>
    </ligand>
</feature>
<feature type="binding site" evidence="1">
    <location>
        <position position="41"/>
    </location>
    <ligand>
        <name>[4Fe-4S] cluster</name>
        <dbReference type="ChEBI" id="CHEBI:49883"/>
        <label>2</label>
    </ligand>
</feature>
<feature type="binding site" evidence="1">
    <location>
        <position position="50"/>
    </location>
    <ligand>
        <name>[4Fe-4S] cluster</name>
        <dbReference type="ChEBI" id="CHEBI:49883"/>
        <label>2</label>
    </ligand>
</feature>
<feature type="binding site" evidence="1">
    <location>
        <position position="54"/>
    </location>
    <ligand>
        <name>[4Fe-4S] cluster</name>
        <dbReference type="ChEBI" id="CHEBI:49883"/>
        <label>1</label>
    </ligand>
</feature>
<gene>
    <name type="ordered locus">CT1736</name>
</gene>
<keyword id="KW-0004">4Fe-4S</keyword>
<keyword id="KW-0249">Electron transport</keyword>
<keyword id="KW-0408">Iron</keyword>
<keyword id="KW-0411">Iron-sulfur</keyword>
<keyword id="KW-0479">Metal-binding</keyword>
<keyword id="KW-1185">Reference proteome</keyword>
<keyword id="KW-0677">Repeat</keyword>
<keyword id="KW-0813">Transport</keyword>
<organism>
    <name type="scientific">Chlorobaculum tepidum (strain ATCC 49652 / DSM 12025 / NBRC 103806 / TLS)</name>
    <name type="common">Chlorobium tepidum</name>
    <dbReference type="NCBI Taxonomy" id="194439"/>
    <lineage>
        <taxon>Bacteria</taxon>
        <taxon>Pseudomonadati</taxon>
        <taxon>Chlorobiota</taxon>
        <taxon>Chlorobiia</taxon>
        <taxon>Chlorobiales</taxon>
        <taxon>Chlorobiaceae</taxon>
        <taxon>Chlorobaculum</taxon>
    </lineage>
</organism>
<protein>
    <recommendedName>
        <fullName>Ferredoxin-3</fullName>
    </recommendedName>
    <alternativeName>
        <fullName>Ferredoxin III</fullName>
        <shortName>FdIII</shortName>
    </alternativeName>
</protein>
<evidence type="ECO:0000250" key="1"/>
<evidence type="ECO:0000255" key="2">
    <source>
        <dbReference type="PROSITE-ProRule" id="PRU00711"/>
    </source>
</evidence>
<sequence>MSLKITEECTFCAACEPECPVNAISAGSDIYVIDESACTECEGYADSPACVAVCPAECIVKA</sequence>
<name>FER3_CHLTE</name>